<organism>
    <name type="scientific">Rhizobium rhizogenes (strain K84 / ATCC BAA-868)</name>
    <name type="common">Agrobacterium radiobacter</name>
    <dbReference type="NCBI Taxonomy" id="311403"/>
    <lineage>
        <taxon>Bacteria</taxon>
        <taxon>Pseudomonadati</taxon>
        <taxon>Pseudomonadota</taxon>
        <taxon>Alphaproteobacteria</taxon>
        <taxon>Hyphomicrobiales</taxon>
        <taxon>Rhizobiaceae</taxon>
        <taxon>Rhizobium/Agrobacterium group</taxon>
        <taxon>Rhizobium</taxon>
    </lineage>
</organism>
<comment type="function">
    <text evidence="1">Binds the lower part of the 30S subunit head. Binds mRNA in the 70S ribosome, positioning it for translation.</text>
</comment>
<comment type="subunit">
    <text evidence="1">Part of the 30S ribosomal subunit. Forms a tight complex with proteins S10 and S14.</text>
</comment>
<comment type="similarity">
    <text evidence="1">Belongs to the universal ribosomal protein uS3 family.</text>
</comment>
<gene>
    <name evidence="1" type="primary">rpsC</name>
    <name type="ordered locus">Arad_1979</name>
</gene>
<name>RS3_RHIR8</name>
<accession>B9JDT4</accession>
<reference key="1">
    <citation type="journal article" date="2009" name="J. Bacteriol.">
        <title>Genome sequences of three Agrobacterium biovars help elucidate the evolution of multichromosome genomes in bacteria.</title>
        <authorList>
            <person name="Slater S.C."/>
            <person name="Goldman B.S."/>
            <person name="Goodner B."/>
            <person name="Setubal J.C."/>
            <person name="Farrand S.K."/>
            <person name="Nester E.W."/>
            <person name="Burr T.J."/>
            <person name="Banta L."/>
            <person name="Dickerman A.W."/>
            <person name="Paulsen I."/>
            <person name="Otten L."/>
            <person name="Suen G."/>
            <person name="Welch R."/>
            <person name="Almeida N.F."/>
            <person name="Arnold F."/>
            <person name="Burton O.T."/>
            <person name="Du Z."/>
            <person name="Ewing A."/>
            <person name="Godsy E."/>
            <person name="Heisel S."/>
            <person name="Houmiel K.L."/>
            <person name="Jhaveri J."/>
            <person name="Lu J."/>
            <person name="Miller N.M."/>
            <person name="Norton S."/>
            <person name="Chen Q."/>
            <person name="Phoolcharoen W."/>
            <person name="Ohlin V."/>
            <person name="Ondrusek D."/>
            <person name="Pride N."/>
            <person name="Stricklin S.L."/>
            <person name="Sun J."/>
            <person name="Wheeler C."/>
            <person name="Wilson L."/>
            <person name="Zhu H."/>
            <person name="Wood D.W."/>
        </authorList>
    </citation>
    <scope>NUCLEOTIDE SEQUENCE [LARGE SCALE GENOMIC DNA]</scope>
    <source>
        <strain>K84 / ATCC BAA-868</strain>
    </source>
</reference>
<dbReference type="EMBL" id="CP000628">
    <property type="protein sequence ID" value="ACM26285.1"/>
    <property type="molecule type" value="Genomic_DNA"/>
</dbReference>
<dbReference type="RefSeq" id="WP_007690761.1">
    <property type="nucleotide sequence ID" value="NC_011985.1"/>
</dbReference>
<dbReference type="SMR" id="B9JDT4"/>
<dbReference type="STRING" id="311403.Arad_1979"/>
<dbReference type="GeneID" id="86848173"/>
<dbReference type="KEGG" id="ara:Arad_1979"/>
<dbReference type="eggNOG" id="COG0092">
    <property type="taxonomic scope" value="Bacteria"/>
</dbReference>
<dbReference type="HOGENOM" id="CLU_058591_0_2_5"/>
<dbReference type="Proteomes" id="UP000001600">
    <property type="component" value="Chromosome 1"/>
</dbReference>
<dbReference type="GO" id="GO:0022627">
    <property type="term" value="C:cytosolic small ribosomal subunit"/>
    <property type="evidence" value="ECO:0007669"/>
    <property type="project" value="TreeGrafter"/>
</dbReference>
<dbReference type="GO" id="GO:0003729">
    <property type="term" value="F:mRNA binding"/>
    <property type="evidence" value="ECO:0007669"/>
    <property type="project" value="UniProtKB-UniRule"/>
</dbReference>
<dbReference type="GO" id="GO:0019843">
    <property type="term" value="F:rRNA binding"/>
    <property type="evidence" value="ECO:0007669"/>
    <property type="project" value="UniProtKB-UniRule"/>
</dbReference>
<dbReference type="GO" id="GO:0003735">
    <property type="term" value="F:structural constituent of ribosome"/>
    <property type="evidence" value="ECO:0007669"/>
    <property type="project" value="InterPro"/>
</dbReference>
<dbReference type="GO" id="GO:0006412">
    <property type="term" value="P:translation"/>
    <property type="evidence" value="ECO:0007669"/>
    <property type="project" value="UniProtKB-UniRule"/>
</dbReference>
<dbReference type="CDD" id="cd02412">
    <property type="entry name" value="KH-II_30S_S3"/>
    <property type="match status" value="1"/>
</dbReference>
<dbReference type="FunFam" id="3.30.1140.32:FF:000002">
    <property type="entry name" value="30S ribosomal protein S3"/>
    <property type="match status" value="1"/>
</dbReference>
<dbReference type="FunFam" id="3.30.300.20:FF:000001">
    <property type="entry name" value="30S ribosomal protein S3"/>
    <property type="match status" value="1"/>
</dbReference>
<dbReference type="Gene3D" id="3.30.300.20">
    <property type="match status" value="1"/>
</dbReference>
<dbReference type="Gene3D" id="3.30.1140.32">
    <property type="entry name" value="Ribosomal protein S3, C-terminal domain"/>
    <property type="match status" value="1"/>
</dbReference>
<dbReference type="HAMAP" id="MF_01309_B">
    <property type="entry name" value="Ribosomal_uS3_B"/>
    <property type="match status" value="1"/>
</dbReference>
<dbReference type="InterPro" id="IPR004087">
    <property type="entry name" value="KH_dom"/>
</dbReference>
<dbReference type="InterPro" id="IPR015946">
    <property type="entry name" value="KH_dom-like_a/b"/>
</dbReference>
<dbReference type="InterPro" id="IPR004044">
    <property type="entry name" value="KH_dom_type_2"/>
</dbReference>
<dbReference type="InterPro" id="IPR009019">
    <property type="entry name" value="KH_sf_prok-type"/>
</dbReference>
<dbReference type="InterPro" id="IPR036419">
    <property type="entry name" value="Ribosomal_S3_C_sf"/>
</dbReference>
<dbReference type="InterPro" id="IPR005704">
    <property type="entry name" value="Ribosomal_uS3_bac-typ"/>
</dbReference>
<dbReference type="InterPro" id="IPR001351">
    <property type="entry name" value="Ribosomal_uS3_C"/>
</dbReference>
<dbReference type="InterPro" id="IPR018280">
    <property type="entry name" value="Ribosomal_uS3_CS"/>
</dbReference>
<dbReference type="NCBIfam" id="TIGR01009">
    <property type="entry name" value="rpsC_bact"/>
    <property type="match status" value="1"/>
</dbReference>
<dbReference type="PANTHER" id="PTHR11760">
    <property type="entry name" value="30S/40S RIBOSOMAL PROTEIN S3"/>
    <property type="match status" value="1"/>
</dbReference>
<dbReference type="PANTHER" id="PTHR11760:SF19">
    <property type="entry name" value="SMALL RIBOSOMAL SUBUNIT PROTEIN US3C"/>
    <property type="match status" value="1"/>
</dbReference>
<dbReference type="Pfam" id="PF07650">
    <property type="entry name" value="KH_2"/>
    <property type="match status" value="1"/>
</dbReference>
<dbReference type="Pfam" id="PF00189">
    <property type="entry name" value="Ribosomal_S3_C"/>
    <property type="match status" value="1"/>
</dbReference>
<dbReference type="SMART" id="SM00322">
    <property type="entry name" value="KH"/>
    <property type="match status" value="1"/>
</dbReference>
<dbReference type="SUPFAM" id="SSF54814">
    <property type="entry name" value="Prokaryotic type KH domain (KH-domain type II)"/>
    <property type="match status" value="1"/>
</dbReference>
<dbReference type="SUPFAM" id="SSF54821">
    <property type="entry name" value="Ribosomal protein S3 C-terminal domain"/>
    <property type="match status" value="1"/>
</dbReference>
<dbReference type="PROSITE" id="PS50823">
    <property type="entry name" value="KH_TYPE_2"/>
    <property type="match status" value="1"/>
</dbReference>
<dbReference type="PROSITE" id="PS00548">
    <property type="entry name" value="RIBOSOMAL_S3"/>
    <property type="match status" value="1"/>
</dbReference>
<protein>
    <recommendedName>
        <fullName evidence="1">Small ribosomal subunit protein uS3</fullName>
    </recommendedName>
    <alternativeName>
        <fullName evidence="3">30S ribosomal protein S3</fullName>
    </alternativeName>
</protein>
<proteinExistence type="inferred from homology"/>
<keyword id="KW-0687">Ribonucleoprotein</keyword>
<keyword id="KW-0689">Ribosomal protein</keyword>
<keyword id="KW-0694">RNA-binding</keyword>
<keyword id="KW-0699">rRNA-binding</keyword>
<evidence type="ECO:0000255" key="1">
    <source>
        <dbReference type="HAMAP-Rule" id="MF_01309"/>
    </source>
</evidence>
<evidence type="ECO:0000256" key="2">
    <source>
        <dbReference type="SAM" id="MobiDB-lite"/>
    </source>
</evidence>
<evidence type="ECO:0000305" key="3"/>
<sequence length="241" mass="27267">MGQKINPIGFRLGINRTWDSRWFADNAEYGQLLHEDLKMRKFVMDELKQAGISKVVIERPHKKCRVTIHSARPGLIIGKKGADIDKLRKKLSDMTNSETHLNIVEVRKPEIDAVLVAQSIAQQLERRVAFRRAMKRAVQSAMRLGAEGIKITCGGRLGGAEIARTEWYREGRVPLHTLRADIDYGTAEAETAFGICGIKVWIFKGEILEHDPMASERRALEGDAQGPASRDRDRDRRRDNA</sequence>
<feature type="chain" id="PRO_1000165472" description="Small ribosomal subunit protein uS3">
    <location>
        <begin position="1"/>
        <end position="241"/>
    </location>
</feature>
<feature type="domain" description="KH type-2" evidence="1">
    <location>
        <begin position="39"/>
        <end position="107"/>
    </location>
</feature>
<feature type="region of interest" description="Disordered" evidence="2">
    <location>
        <begin position="214"/>
        <end position="241"/>
    </location>
</feature>
<feature type="compositionally biased region" description="Basic and acidic residues" evidence="2">
    <location>
        <begin position="229"/>
        <end position="241"/>
    </location>
</feature>